<proteinExistence type="inferred from homology"/>
<feature type="transit peptide" description="Mitochondrion" evidence="2">
    <location>
        <begin position="1"/>
        <end position="18"/>
    </location>
</feature>
<feature type="chain" id="PRO_0000399537" description="Altered inheritance of mitochondria protein 23, mitochondrial">
    <location>
        <begin position="19"/>
        <end position="378"/>
    </location>
</feature>
<feature type="region of interest" description="Disordered" evidence="3">
    <location>
        <begin position="339"/>
        <end position="378"/>
    </location>
</feature>
<feature type="compositionally biased region" description="Basic and acidic residues" evidence="3">
    <location>
        <begin position="343"/>
        <end position="367"/>
    </location>
</feature>
<organism>
    <name type="scientific">Lachancea thermotolerans (strain ATCC 56472 / CBS 6340 / NRRL Y-8284)</name>
    <name type="common">Yeast</name>
    <name type="synonym">Kluyveromyces thermotolerans</name>
    <dbReference type="NCBI Taxonomy" id="559295"/>
    <lineage>
        <taxon>Eukaryota</taxon>
        <taxon>Fungi</taxon>
        <taxon>Dikarya</taxon>
        <taxon>Ascomycota</taxon>
        <taxon>Saccharomycotina</taxon>
        <taxon>Saccharomycetes</taxon>
        <taxon>Saccharomycetales</taxon>
        <taxon>Saccharomycetaceae</taxon>
        <taxon>Lachancea</taxon>
    </lineage>
</organism>
<dbReference type="EMBL" id="CU928170">
    <property type="protein sequence ID" value="CAR24023.1"/>
    <property type="molecule type" value="Genomic_DNA"/>
</dbReference>
<dbReference type="RefSeq" id="XP_002554460.1">
    <property type="nucleotide sequence ID" value="XM_002554414.1"/>
</dbReference>
<dbReference type="SMR" id="C5DKM2"/>
<dbReference type="FunCoup" id="C5DKM2">
    <property type="interactions" value="48"/>
</dbReference>
<dbReference type="GeneID" id="8292658"/>
<dbReference type="KEGG" id="lth:KLTH0F05852g"/>
<dbReference type="eggNOG" id="ENOG502RY27">
    <property type="taxonomic scope" value="Eukaryota"/>
</dbReference>
<dbReference type="HOGENOM" id="CLU_057910_0_0_1"/>
<dbReference type="InParanoid" id="C5DKM2"/>
<dbReference type="OMA" id="KVSWQIS"/>
<dbReference type="OrthoDB" id="3996489at2759"/>
<dbReference type="Proteomes" id="UP000002036">
    <property type="component" value="Chromosome F"/>
</dbReference>
<dbReference type="GO" id="GO:0005739">
    <property type="term" value="C:mitochondrion"/>
    <property type="evidence" value="ECO:0007669"/>
    <property type="project" value="UniProtKB-SubCell"/>
</dbReference>
<dbReference type="InterPro" id="IPR029427">
    <property type="entry name" value="AIM23"/>
</dbReference>
<dbReference type="Pfam" id="PF14877">
    <property type="entry name" value="mIF3"/>
    <property type="match status" value="1"/>
</dbReference>
<gene>
    <name type="primary">AIM23</name>
    <name type="ordered locus">KLTH0F05852g</name>
</gene>
<reference key="1">
    <citation type="journal article" date="2009" name="Genome Res.">
        <title>Comparative genomics of protoploid Saccharomycetaceae.</title>
        <authorList>
            <consortium name="The Genolevures Consortium"/>
            <person name="Souciet J.-L."/>
            <person name="Dujon B."/>
            <person name="Gaillardin C."/>
            <person name="Johnston M."/>
            <person name="Baret P.V."/>
            <person name="Cliften P."/>
            <person name="Sherman D.J."/>
            <person name="Weissenbach J."/>
            <person name="Westhof E."/>
            <person name="Wincker P."/>
            <person name="Jubin C."/>
            <person name="Poulain J."/>
            <person name="Barbe V."/>
            <person name="Segurens B."/>
            <person name="Artiguenave F."/>
            <person name="Anthouard V."/>
            <person name="Vacherie B."/>
            <person name="Val M.-E."/>
            <person name="Fulton R.S."/>
            <person name="Minx P."/>
            <person name="Wilson R."/>
            <person name="Durrens P."/>
            <person name="Jean G."/>
            <person name="Marck C."/>
            <person name="Martin T."/>
            <person name="Nikolski M."/>
            <person name="Rolland T."/>
            <person name="Seret M.-L."/>
            <person name="Casaregola S."/>
            <person name="Despons L."/>
            <person name="Fairhead C."/>
            <person name="Fischer G."/>
            <person name="Lafontaine I."/>
            <person name="Leh V."/>
            <person name="Lemaire M."/>
            <person name="de Montigny J."/>
            <person name="Neuveglise C."/>
            <person name="Thierry A."/>
            <person name="Blanc-Lenfle I."/>
            <person name="Bleykasten C."/>
            <person name="Diffels J."/>
            <person name="Fritsch E."/>
            <person name="Frangeul L."/>
            <person name="Goeffon A."/>
            <person name="Jauniaux N."/>
            <person name="Kachouri-Lafond R."/>
            <person name="Payen C."/>
            <person name="Potier S."/>
            <person name="Pribylova L."/>
            <person name="Ozanne C."/>
            <person name="Richard G.-F."/>
            <person name="Sacerdot C."/>
            <person name="Straub M.-L."/>
            <person name="Talla E."/>
        </authorList>
    </citation>
    <scope>NUCLEOTIDE SEQUENCE [LARGE SCALE GENOMIC DNA]</scope>
    <source>
        <strain>ATCC 56472 / CBS 6340 / NRRL Y-8284</strain>
    </source>
</reference>
<name>AIM23_LACTC</name>
<keyword id="KW-0496">Mitochondrion</keyword>
<keyword id="KW-1185">Reference proteome</keyword>
<keyword id="KW-0809">Transit peptide</keyword>
<accession>C5DKM2</accession>
<sequence length="378" mass="43537">MKLIASVLNPVHNFDARSTAMLSLLTFKNCFLSNGRVLIFQLKPCRKLQTTRFVLAESVASNNDILFNATASMRKNKDAAKLMTDRIHYVSPAKRKQTRTPSTGHQNRKRTTLKWNTGSERAQAAANFTLRQVFKMNERGVVKVVNQTTNKLEETSILIWAGELDLQKHGLAIVDVEQRGTFSIPLVKLVESKTALKKYSDELAKQKEEELTRLGFSSKRTGRKNENDSNEDNLKQIKVSWQISDADLNKQKANEIISQLKKGYKVFLYMNGKDALNKSNWAEDITDEEPAHTRKHSDRELERRQHIVEQLQVIVNEFSLSPTVEGSIETRLIMKLSPKPVASKKEDRMALKEQRKRERQEKLERKLEKKKLRNSENY</sequence>
<protein>
    <recommendedName>
        <fullName>Altered inheritance of mitochondria protein 23, mitochondrial</fullName>
    </recommendedName>
</protein>
<comment type="subcellular location">
    <subcellularLocation>
        <location evidence="1">Mitochondrion</location>
    </subcellularLocation>
</comment>
<comment type="similarity">
    <text evidence="4">Belongs to the AIM23 family.</text>
</comment>
<evidence type="ECO:0000250" key="1"/>
<evidence type="ECO:0000255" key="2"/>
<evidence type="ECO:0000256" key="3">
    <source>
        <dbReference type="SAM" id="MobiDB-lite"/>
    </source>
</evidence>
<evidence type="ECO:0000305" key="4"/>